<organism>
    <name type="scientific">Desulforamulus reducens (strain ATCC BAA-1160 / DSM 100696 / MI-1)</name>
    <name type="common">Desulfotomaculum reducens</name>
    <dbReference type="NCBI Taxonomy" id="349161"/>
    <lineage>
        <taxon>Bacteria</taxon>
        <taxon>Bacillati</taxon>
        <taxon>Bacillota</taxon>
        <taxon>Clostridia</taxon>
        <taxon>Eubacteriales</taxon>
        <taxon>Peptococcaceae</taxon>
        <taxon>Desulforamulus</taxon>
    </lineage>
</organism>
<proteinExistence type="inferred from homology"/>
<protein>
    <recommendedName>
        <fullName evidence="1">S-adenosylmethionine synthase</fullName>
        <shortName evidence="1">AdoMet synthase</shortName>
        <ecNumber evidence="1">2.5.1.6</ecNumber>
    </recommendedName>
    <alternativeName>
        <fullName evidence="1">MAT</fullName>
    </alternativeName>
    <alternativeName>
        <fullName evidence="1">Methionine adenosyltransferase</fullName>
    </alternativeName>
</protein>
<reference key="1">
    <citation type="submission" date="2007-03" db="EMBL/GenBank/DDBJ databases">
        <title>Complete sequence of Desulfotomaculum reducens MI-1.</title>
        <authorList>
            <consortium name="US DOE Joint Genome Institute"/>
            <person name="Copeland A."/>
            <person name="Lucas S."/>
            <person name="Lapidus A."/>
            <person name="Barry K."/>
            <person name="Detter J.C."/>
            <person name="Glavina del Rio T."/>
            <person name="Hammon N."/>
            <person name="Israni S."/>
            <person name="Dalin E."/>
            <person name="Tice H."/>
            <person name="Pitluck S."/>
            <person name="Sims D."/>
            <person name="Brettin T."/>
            <person name="Bruce D."/>
            <person name="Han C."/>
            <person name="Tapia R."/>
            <person name="Schmutz J."/>
            <person name="Larimer F."/>
            <person name="Land M."/>
            <person name="Hauser L."/>
            <person name="Kyrpides N."/>
            <person name="Kim E."/>
            <person name="Tebo B.M."/>
            <person name="Richardson P."/>
        </authorList>
    </citation>
    <scope>NUCLEOTIDE SEQUENCE [LARGE SCALE GENOMIC DNA]</scope>
    <source>
        <strain>ATCC BAA-1160 / DSM 100696 / MI-1</strain>
    </source>
</reference>
<evidence type="ECO:0000255" key="1">
    <source>
        <dbReference type="HAMAP-Rule" id="MF_00086"/>
    </source>
</evidence>
<feature type="chain" id="PRO_1000071237" description="S-adenosylmethionine synthase">
    <location>
        <begin position="1"/>
        <end position="397"/>
    </location>
</feature>
<feature type="region of interest" description="Flexible loop" evidence="1">
    <location>
        <begin position="99"/>
        <end position="109"/>
    </location>
</feature>
<feature type="binding site" description="in other chain" evidence="1">
    <location>
        <position position="15"/>
    </location>
    <ligand>
        <name>ATP</name>
        <dbReference type="ChEBI" id="CHEBI:30616"/>
        <note>ligand shared between two neighboring subunits</note>
    </ligand>
</feature>
<feature type="binding site" evidence="1">
    <location>
        <position position="17"/>
    </location>
    <ligand>
        <name>Mg(2+)</name>
        <dbReference type="ChEBI" id="CHEBI:18420"/>
    </ligand>
</feature>
<feature type="binding site" evidence="1">
    <location>
        <position position="43"/>
    </location>
    <ligand>
        <name>K(+)</name>
        <dbReference type="ChEBI" id="CHEBI:29103"/>
    </ligand>
</feature>
<feature type="binding site" description="in other chain" evidence="1">
    <location>
        <position position="56"/>
    </location>
    <ligand>
        <name>L-methionine</name>
        <dbReference type="ChEBI" id="CHEBI:57844"/>
        <note>ligand shared between two neighboring subunits</note>
    </ligand>
</feature>
<feature type="binding site" description="in other chain" evidence="1">
    <location>
        <position position="99"/>
    </location>
    <ligand>
        <name>L-methionine</name>
        <dbReference type="ChEBI" id="CHEBI:57844"/>
        <note>ligand shared between two neighboring subunits</note>
    </ligand>
</feature>
<feature type="binding site" description="in other chain" evidence="1">
    <location>
        <begin position="175"/>
        <end position="177"/>
    </location>
    <ligand>
        <name>ATP</name>
        <dbReference type="ChEBI" id="CHEBI:30616"/>
        <note>ligand shared between two neighboring subunits</note>
    </ligand>
</feature>
<feature type="binding site" description="in other chain" evidence="1">
    <location>
        <begin position="241"/>
        <end position="242"/>
    </location>
    <ligand>
        <name>ATP</name>
        <dbReference type="ChEBI" id="CHEBI:30616"/>
        <note>ligand shared between two neighboring subunits</note>
    </ligand>
</feature>
<feature type="binding site" evidence="1">
    <location>
        <position position="250"/>
    </location>
    <ligand>
        <name>ATP</name>
        <dbReference type="ChEBI" id="CHEBI:30616"/>
        <note>ligand shared between two neighboring subunits</note>
    </ligand>
</feature>
<feature type="binding site" evidence="1">
    <location>
        <position position="250"/>
    </location>
    <ligand>
        <name>L-methionine</name>
        <dbReference type="ChEBI" id="CHEBI:57844"/>
        <note>ligand shared between two neighboring subunits</note>
    </ligand>
</feature>
<feature type="binding site" description="in other chain" evidence="1">
    <location>
        <begin position="256"/>
        <end position="257"/>
    </location>
    <ligand>
        <name>ATP</name>
        <dbReference type="ChEBI" id="CHEBI:30616"/>
        <note>ligand shared between two neighboring subunits</note>
    </ligand>
</feature>
<feature type="binding site" evidence="1">
    <location>
        <position position="273"/>
    </location>
    <ligand>
        <name>ATP</name>
        <dbReference type="ChEBI" id="CHEBI:30616"/>
        <note>ligand shared between two neighboring subunits</note>
    </ligand>
</feature>
<feature type="binding site" evidence="1">
    <location>
        <position position="277"/>
    </location>
    <ligand>
        <name>ATP</name>
        <dbReference type="ChEBI" id="CHEBI:30616"/>
        <note>ligand shared between two neighboring subunits</note>
    </ligand>
</feature>
<feature type="binding site" description="in other chain" evidence="1">
    <location>
        <position position="281"/>
    </location>
    <ligand>
        <name>L-methionine</name>
        <dbReference type="ChEBI" id="CHEBI:57844"/>
        <note>ligand shared between two neighboring subunits</note>
    </ligand>
</feature>
<accession>A4J945</accession>
<name>METK_DESRM</name>
<sequence length="397" mass="42911">MSRKLFTSESVTEGHPDKVADQISDAILDSILAKDPMARVACETFVTTGLVLVGGEISCQCYVDIPKVVRETILEIGYTRAKYGFDGDTCAVLTAIDEQSPDIAMGVDKALEAKTGETTEAEIEAIGAGDQGMMFGYATDETPELMPLPISLAHTMARRLSEVRKTGIVDYLRPDGKTQVTVEYDGDKPSRIDTVVISTQHHPEVDLETIRKDMIEKVALHVLPAELVDDKTRFLINPTGRFVIGGPHGDAGLTGRKIIVDTYGGSARHGGGAFSGKDPTKVDRSAAYAARYVAKNVVAAGLAKRCEVQLAYAIGVAHPVSVRVQTFGTGAVSDEVIIDLINRHFDLRPAGIIKSLELRRPIYKQTAAYGHFGRPDLDLPWECTDKADALRAEAGLK</sequence>
<comment type="function">
    <text evidence="1">Catalyzes the formation of S-adenosylmethionine (AdoMet) from methionine and ATP. The overall synthetic reaction is composed of two sequential steps, AdoMet formation and the subsequent tripolyphosphate hydrolysis which occurs prior to release of AdoMet from the enzyme.</text>
</comment>
<comment type="catalytic activity">
    <reaction evidence="1">
        <text>L-methionine + ATP + H2O = S-adenosyl-L-methionine + phosphate + diphosphate</text>
        <dbReference type="Rhea" id="RHEA:21080"/>
        <dbReference type="ChEBI" id="CHEBI:15377"/>
        <dbReference type="ChEBI" id="CHEBI:30616"/>
        <dbReference type="ChEBI" id="CHEBI:33019"/>
        <dbReference type="ChEBI" id="CHEBI:43474"/>
        <dbReference type="ChEBI" id="CHEBI:57844"/>
        <dbReference type="ChEBI" id="CHEBI:59789"/>
        <dbReference type="EC" id="2.5.1.6"/>
    </reaction>
</comment>
<comment type="cofactor">
    <cofactor evidence="1">
        <name>Mg(2+)</name>
        <dbReference type="ChEBI" id="CHEBI:18420"/>
    </cofactor>
    <text evidence="1">Binds 2 divalent ions per subunit.</text>
</comment>
<comment type="cofactor">
    <cofactor evidence="1">
        <name>K(+)</name>
        <dbReference type="ChEBI" id="CHEBI:29103"/>
    </cofactor>
    <text evidence="1">Binds 1 potassium ion per subunit.</text>
</comment>
<comment type="pathway">
    <text evidence="1">Amino-acid biosynthesis; S-adenosyl-L-methionine biosynthesis; S-adenosyl-L-methionine from L-methionine: step 1/1.</text>
</comment>
<comment type="subunit">
    <text evidence="1">Homotetramer; dimer of dimers.</text>
</comment>
<comment type="subcellular location">
    <subcellularLocation>
        <location evidence="1">Cytoplasm</location>
    </subcellularLocation>
</comment>
<comment type="similarity">
    <text evidence="1">Belongs to the AdoMet synthase family.</text>
</comment>
<keyword id="KW-0067">ATP-binding</keyword>
<keyword id="KW-0963">Cytoplasm</keyword>
<keyword id="KW-0460">Magnesium</keyword>
<keyword id="KW-0479">Metal-binding</keyword>
<keyword id="KW-0547">Nucleotide-binding</keyword>
<keyword id="KW-0554">One-carbon metabolism</keyword>
<keyword id="KW-0630">Potassium</keyword>
<keyword id="KW-1185">Reference proteome</keyword>
<keyword id="KW-0808">Transferase</keyword>
<gene>
    <name evidence="1" type="primary">metK</name>
    <name type="ordered locus">Dred_3096</name>
</gene>
<dbReference type="EC" id="2.5.1.6" evidence="1"/>
<dbReference type="EMBL" id="CP000612">
    <property type="protein sequence ID" value="ABO51598.1"/>
    <property type="molecule type" value="Genomic_DNA"/>
</dbReference>
<dbReference type="RefSeq" id="WP_011879387.1">
    <property type="nucleotide sequence ID" value="NC_009253.1"/>
</dbReference>
<dbReference type="SMR" id="A4J945"/>
<dbReference type="STRING" id="349161.Dred_3096"/>
<dbReference type="KEGG" id="drm:Dred_3096"/>
<dbReference type="eggNOG" id="COG0192">
    <property type="taxonomic scope" value="Bacteria"/>
</dbReference>
<dbReference type="HOGENOM" id="CLU_041802_1_1_9"/>
<dbReference type="OrthoDB" id="9801686at2"/>
<dbReference type="UniPathway" id="UPA00315">
    <property type="reaction ID" value="UER00080"/>
</dbReference>
<dbReference type="Proteomes" id="UP000001556">
    <property type="component" value="Chromosome"/>
</dbReference>
<dbReference type="GO" id="GO:0005737">
    <property type="term" value="C:cytoplasm"/>
    <property type="evidence" value="ECO:0007669"/>
    <property type="project" value="UniProtKB-SubCell"/>
</dbReference>
<dbReference type="GO" id="GO:0005524">
    <property type="term" value="F:ATP binding"/>
    <property type="evidence" value="ECO:0007669"/>
    <property type="project" value="UniProtKB-UniRule"/>
</dbReference>
<dbReference type="GO" id="GO:0000287">
    <property type="term" value="F:magnesium ion binding"/>
    <property type="evidence" value="ECO:0007669"/>
    <property type="project" value="UniProtKB-UniRule"/>
</dbReference>
<dbReference type="GO" id="GO:0004478">
    <property type="term" value="F:methionine adenosyltransferase activity"/>
    <property type="evidence" value="ECO:0007669"/>
    <property type="project" value="UniProtKB-UniRule"/>
</dbReference>
<dbReference type="GO" id="GO:0006730">
    <property type="term" value="P:one-carbon metabolic process"/>
    <property type="evidence" value="ECO:0007669"/>
    <property type="project" value="UniProtKB-KW"/>
</dbReference>
<dbReference type="GO" id="GO:0006556">
    <property type="term" value="P:S-adenosylmethionine biosynthetic process"/>
    <property type="evidence" value="ECO:0007669"/>
    <property type="project" value="UniProtKB-UniRule"/>
</dbReference>
<dbReference type="CDD" id="cd18079">
    <property type="entry name" value="S-AdoMet_synt"/>
    <property type="match status" value="1"/>
</dbReference>
<dbReference type="FunFam" id="3.30.300.10:FF:000003">
    <property type="entry name" value="S-adenosylmethionine synthase"/>
    <property type="match status" value="1"/>
</dbReference>
<dbReference type="FunFam" id="3.30.300.10:FF:000004">
    <property type="entry name" value="S-adenosylmethionine synthase"/>
    <property type="match status" value="1"/>
</dbReference>
<dbReference type="Gene3D" id="3.30.300.10">
    <property type="match status" value="3"/>
</dbReference>
<dbReference type="HAMAP" id="MF_00086">
    <property type="entry name" value="S_AdoMet_synth1"/>
    <property type="match status" value="1"/>
</dbReference>
<dbReference type="InterPro" id="IPR022631">
    <property type="entry name" value="ADOMET_SYNTHASE_CS"/>
</dbReference>
<dbReference type="InterPro" id="IPR022630">
    <property type="entry name" value="S-AdoMet_synt_C"/>
</dbReference>
<dbReference type="InterPro" id="IPR022629">
    <property type="entry name" value="S-AdoMet_synt_central"/>
</dbReference>
<dbReference type="InterPro" id="IPR022628">
    <property type="entry name" value="S-AdoMet_synt_N"/>
</dbReference>
<dbReference type="InterPro" id="IPR002133">
    <property type="entry name" value="S-AdoMet_synthetase"/>
</dbReference>
<dbReference type="InterPro" id="IPR022636">
    <property type="entry name" value="S-AdoMet_synthetase_sfam"/>
</dbReference>
<dbReference type="NCBIfam" id="TIGR01034">
    <property type="entry name" value="metK"/>
    <property type="match status" value="1"/>
</dbReference>
<dbReference type="PANTHER" id="PTHR11964">
    <property type="entry name" value="S-ADENOSYLMETHIONINE SYNTHETASE"/>
    <property type="match status" value="1"/>
</dbReference>
<dbReference type="Pfam" id="PF02773">
    <property type="entry name" value="S-AdoMet_synt_C"/>
    <property type="match status" value="1"/>
</dbReference>
<dbReference type="Pfam" id="PF02772">
    <property type="entry name" value="S-AdoMet_synt_M"/>
    <property type="match status" value="1"/>
</dbReference>
<dbReference type="Pfam" id="PF00438">
    <property type="entry name" value="S-AdoMet_synt_N"/>
    <property type="match status" value="1"/>
</dbReference>
<dbReference type="PIRSF" id="PIRSF000497">
    <property type="entry name" value="MAT"/>
    <property type="match status" value="1"/>
</dbReference>
<dbReference type="SUPFAM" id="SSF55973">
    <property type="entry name" value="S-adenosylmethionine synthetase"/>
    <property type="match status" value="3"/>
</dbReference>
<dbReference type="PROSITE" id="PS00376">
    <property type="entry name" value="ADOMET_SYNTHASE_1"/>
    <property type="match status" value="1"/>
</dbReference>
<dbReference type="PROSITE" id="PS00377">
    <property type="entry name" value="ADOMET_SYNTHASE_2"/>
    <property type="match status" value="1"/>
</dbReference>